<feature type="chain" id="PRO_0000150339" description="Cysteine desulfurase">
    <location>
        <begin position="1"/>
        <end position="406"/>
    </location>
</feature>
<feature type="active site" description="Cysteine persulfide intermediate" evidence="1">
    <location>
        <position position="364"/>
    </location>
</feature>
<feature type="modified residue" description="N6-(pyridoxal phosphate)lysine" evidence="1">
    <location>
        <position position="226"/>
    </location>
</feature>
<accession>Q8D0M6</accession>
<accession>Q0WEC3</accession>
<accession>Q74TH1</accession>
<accession>Q8ZDZ4</accession>
<dbReference type="EC" id="2.8.1.7" evidence="1"/>
<dbReference type="EC" id="4.4.1.16" evidence="1"/>
<dbReference type="EMBL" id="AL590842">
    <property type="protein sequence ID" value="CAL21028.1"/>
    <property type="molecule type" value="Genomic_DNA"/>
</dbReference>
<dbReference type="EMBL" id="AE009952">
    <property type="protein sequence ID" value="AAM85504.1"/>
    <property type="status" value="ALT_INIT"/>
    <property type="molecule type" value="Genomic_DNA"/>
</dbReference>
<dbReference type="EMBL" id="AE017042">
    <property type="protein sequence ID" value="AAS62394.1"/>
    <property type="status" value="ALT_INIT"/>
    <property type="molecule type" value="Genomic_DNA"/>
</dbReference>
<dbReference type="PIR" id="AI0292">
    <property type="entry name" value="AI0292"/>
</dbReference>
<dbReference type="RefSeq" id="WP_002211805.1">
    <property type="nucleotide sequence ID" value="NZ_WUCM01000025.1"/>
</dbReference>
<dbReference type="RefSeq" id="YP_002347365.1">
    <property type="nucleotide sequence ID" value="NC_003143.1"/>
</dbReference>
<dbReference type="SMR" id="Q8D0M6"/>
<dbReference type="STRING" id="214092.YPO2400"/>
<dbReference type="PaxDb" id="214092-YPO2400"/>
<dbReference type="DNASU" id="1146885"/>
<dbReference type="EnsemblBacteria" id="AAS62394">
    <property type="protein sequence ID" value="AAS62394"/>
    <property type="gene ID" value="YP_2187"/>
</dbReference>
<dbReference type="GeneID" id="57976274"/>
<dbReference type="KEGG" id="ype:YPO2400"/>
<dbReference type="KEGG" id="ypk:y1938"/>
<dbReference type="KEGG" id="ypm:YP_2187"/>
<dbReference type="PATRIC" id="fig|214092.21.peg.2808"/>
<dbReference type="eggNOG" id="COG0520">
    <property type="taxonomic scope" value="Bacteria"/>
</dbReference>
<dbReference type="HOGENOM" id="CLU_003433_2_5_6"/>
<dbReference type="OMA" id="LVTWQQI"/>
<dbReference type="OrthoDB" id="9808002at2"/>
<dbReference type="UniPathway" id="UPA00266"/>
<dbReference type="Proteomes" id="UP000000815">
    <property type="component" value="Chromosome"/>
</dbReference>
<dbReference type="Proteomes" id="UP000001019">
    <property type="component" value="Chromosome"/>
</dbReference>
<dbReference type="Proteomes" id="UP000002490">
    <property type="component" value="Chromosome"/>
</dbReference>
<dbReference type="GO" id="GO:0005737">
    <property type="term" value="C:cytoplasm"/>
    <property type="evidence" value="ECO:0007669"/>
    <property type="project" value="UniProtKB-SubCell"/>
</dbReference>
<dbReference type="GO" id="GO:0031071">
    <property type="term" value="F:cysteine desulfurase activity"/>
    <property type="evidence" value="ECO:0007669"/>
    <property type="project" value="UniProtKB-UniRule"/>
</dbReference>
<dbReference type="GO" id="GO:0030170">
    <property type="term" value="F:pyridoxal phosphate binding"/>
    <property type="evidence" value="ECO:0007669"/>
    <property type="project" value="InterPro"/>
</dbReference>
<dbReference type="GO" id="GO:0009000">
    <property type="term" value="F:selenocysteine lyase activity"/>
    <property type="evidence" value="ECO:0007669"/>
    <property type="project" value="UniProtKB-UniRule"/>
</dbReference>
<dbReference type="GO" id="GO:0006534">
    <property type="term" value="P:cysteine metabolic process"/>
    <property type="evidence" value="ECO:0007669"/>
    <property type="project" value="InterPro"/>
</dbReference>
<dbReference type="CDD" id="cd06453">
    <property type="entry name" value="SufS_like"/>
    <property type="match status" value="1"/>
</dbReference>
<dbReference type="Gene3D" id="3.90.1150.10">
    <property type="entry name" value="Aspartate Aminotransferase, domain 1"/>
    <property type="match status" value="1"/>
</dbReference>
<dbReference type="Gene3D" id="3.40.640.10">
    <property type="entry name" value="Type I PLP-dependent aspartate aminotransferase-like (Major domain)"/>
    <property type="match status" value="1"/>
</dbReference>
<dbReference type="HAMAP" id="MF_01831">
    <property type="entry name" value="SufS_aminotrans_5"/>
    <property type="match status" value="1"/>
</dbReference>
<dbReference type="InterPro" id="IPR000192">
    <property type="entry name" value="Aminotrans_V_dom"/>
</dbReference>
<dbReference type="InterPro" id="IPR020578">
    <property type="entry name" value="Aminotrans_V_PyrdxlP_BS"/>
</dbReference>
<dbReference type="InterPro" id="IPR010970">
    <property type="entry name" value="Cys_dSase_SufS"/>
</dbReference>
<dbReference type="InterPro" id="IPR015424">
    <property type="entry name" value="PyrdxlP-dep_Trfase"/>
</dbReference>
<dbReference type="InterPro" id="IPR015421">
    <property type="entry name" value="PyrdxlP-dep_Trfase_major"/>
</dbReference>
<dbReference type="InterPro" id="IPR015422">
    <property type="entry name" value="PyrdxlP-dep_Trfase_small"/>
</dbReference>
<dbReference type="NCBIfam" id="NF006791">
    <property type="entry name" value="PRK09295.1"/>
    <property type="match status" value="1"/>
</dbReference>
<dbReference type="NCBIfam" id="TIGR01979">
    <property type="entry name" value="sufS"/>
    <property type="match status" value="1"/>
</dbReference>
<dbReference type="PANTHER" id="PTHR43586">
    <property type="entry name" value="CYSTEINE DESULFURASE"/>
    <property type="match status" value="1"/>
</dbReference>
<dbReference type="PANTHER" id="PTHR43586:SF25">
    <property type="entry name" value="CYSTEINE DESULFURASE"/>
    <property type="match status" value="1"/>
</dbReference>
<dbReference type="Pfam" id="PF00266">
    <property type="entry name" value="Aminotran_5"/>
    <property type="match status" value="1"/>
</dbReference>
<dbReference type="SUPFAM" id="SSF53383">
    <property type="entry name" value="PLP-dependent transferases"/>
    <property type="match status" value="1"/>
</dbReference>
<dbReference type="PROSITE" id="PS00595">
    <property type="entry name" value="AA_TRANSFER_CLASS_5"/>
    <property type="match status" value="1"/>
</dbReference>
<gene>
    <name evidence="1" type="primary">sufS</name>
    <name type="ordered locus">YPO2400</name>
    <name type="ordered locus">y1938</name>
    <name type="ordered locus">YP_2187</name>
</gene>
<protein>
    <recommendedName>
        <fullName evidence="1">Cysteine desulfurase</fullName>
        <ecNumber evidence="1">2.8.1.7</ecNumber>
    </recommendedName>
    <alternativeName>
        <fullName evidence="1">Selenocysteine beta-lyase</fullName>
        <shortName evidence="1">SCL</shortName>
    </alternativeName>
    <alternativeName>
        <fullName evidence="1">Selenocysteine lyase</fullName>
        <ecNumber evidence="1">4.4.1.16</ecNumber>
    </alternativeName>
    <alternativeName>
        <fullName evidence="1">Selenocysteine reductase</fullName>
    </alternativeName>
</protein>
<organism>
    <name type="scientific">Yersinia pestis</name>
    <dbReference type="NCBI Taxonomy" id="632"/>
    <lineage>
        <taxon>Bacteria</taxon>
        <taxon>Pseudomonadati</taxon>
        <taxon>Pseudomonadota</taxon>
        <taxon>Gammaproteobacteria</taxon>
        <taxon>Enterobacterales</taxon>
        <taxon>Yersiniaceae</taxon>
        <taxon>Yersinia</taxon>
    </lineage>
</organism>
<name>SUFS_YERPE</name>
<reference key="1">
    <citation type="journal article" date="2001" name="Nature">
        <title>Genome sequence of Yersinia pestis, the causative agent of plague.</title>
        <authorList>
            <person name="Parkhill J."/>
            <person name="Wren B.W."/>
            <person name="Thomson N.R."/>
            <person name="Titball R.W."/>
            <person name="Holden M.T.G."/>
            <person name="Prentice M.B."/>
            <person name="Sebaihia M."/>
            <person name="James K.D."/>
            <person name="Churcher C.M."/>
            <person name="Mungall K.L."/>
            <person name="Baker S."/>
            <person name="Basham D."/>
            <person name="Bentley S.D."/>
            <person name="Brooks K."/>
            <person name="Cerdeno-Tarraga A.-M."/>
            <person name="Chillingworth T."/>
            <person name="Cronin A."/>
            <person name="Davies R.M."/>
            <person name="Davis P."/>
            <person name="Dougan G."/>
            <person name="Feltwell T."/>
            <person name="Hamlin N."/>
            <person name="Holroyd S."/>
            <person name="Jagels K."/>
            <person name="Karlyshev A.V."/>
            <person name="Leather S."/>
            <person name="Moule S."/>
            <person name="Oyston P.C.F."/>
            <person name="Quail M.A."/>
            <person name="Rutherford K.M."/>
            <person name="Simmonds M."/>
            <person name="Skelton J."/>
            <person name="Stevens K."/>
            <person name="Whitehead S."/>
            <person name="Barrell B.G."/>
        </authorList>
    </citation>
    <scope>NUCLEOTIDE SEQUENCE [LARGE SCALE GENOMIC DNA]</scope>
    <source>
        <strain>CO-92 / Biovar Orientalis</strain>
    </source>
</reference>
<reference key="2">
    <citation type="journal article" date="2002" name="J. Bacteriol.">
        <title>Genome sequence of Yersinia pestis KIM.</title>
        <authorList>
            <person name="Deng W."/>
            <person name="Burland V."/>
            <person name="Plunkett G. III"/>
            <person name="Boutin A."/>
            <person name="Mayhew G.F."/>
            <person name="Liss P."/>
            <person name="Perna N.T."/>
            <person name="Rose D.J."/>
            <person name="Mau B."/>
            <person name="Zhou S."/>
            <person name="Schwartz D.C."/>
            <person name="Fetherston J.D."/>
            <person name="Lindler L.E."/>
            <person name="Brubaker R.R."/>
            <person name="Plano G.V."/>
            <person name="Straley S.C."/>
            <person name="McDonough K.A."/>
            <person name="Nilles M.L."/>
            <person name="Matson J.S."/>
            <person name="Blattner F.R."/>
            <person name="Perry R.D."/>
        </authorList>
    </citation>
    <scope>NUCLEOTIDE SEQUENCE [LARGE SCALE GENOMIC DNA]</scope>
    <source>
        <strain>KIM10+ / Biovar Mediaevalis</strain>
    </source>
</reference>
<reference key="3">
    <citation type="journal article" date="2004" name="DNA Res.">
        <title>Complete genome sequence of Yersinia pestis strain 91001, an isolate avirulent to humans.</title>
        <authorList>
            <person name="Song Y."/>
            <person name="Tong Z."/>
            <person name="Wang J."/>
            <person name="Wang L."/>
            <person name="Guo Z."/>
            <person name="Han Y."/>
            <person name="Zhang J."/>
            <person name="Pei D."/>
            <person name="Zhou D."/>
            <person name="Qin H."/>
            <person name="Pang X."/>
            <person name="Han Y."/>
            <person name="Zhai J."/>
            <person name="Li M."/>
            <person name="Cui B."/>
            <person name="Qi Z."/>
            <person name="Jin L."/>
            <person name="Dai R."/>
            <person name="Chen F."/>
            <person name="Li S."/>
            <person name="Ye C."/>
            <person name="Du Z."/>
            <person name="Lin W."/>
            <person name="Wang J."/>
            <person name="Yu J."/>
            <person name="Yang H."/>
            <person name="Wang J."/>
            <person name="Huang P."/>
            <person name="Yang R."/>
        </authorList>
    </citation>
    <scope>NUCLEOTIDE SEQUENCE [LARGE SCALE GENOMIC DNA]</scope>
    <source>
        <strain>91001 / Biovar Mediaevalis</strain>
    </source>
</reference>
<evidence type="ECO:0000255" key="1">
    <source>
        <dbReference type="HAMAP-Rule" id="MF_01831"/>
    </source>
</evidence>
<evidence type="ECO:0000305" key="2"/>
<keyword id="KW-0963">Cytoplasm</keyword>
<keyword id="KW-0456">Lyase</keyword>
<keyword id="KW-0663">Pyridoxal phosphate</keyword>
<keyword id="KW-1185">Reference proteome</keyword>
<keyword id="KW-0808">Transferase</keyword>
<comment type="function">
    <text evidence="1">Cysteine desulfurases mobilize the sulfur from L-cysteine to yield L-alanine, an essential step in sulfur metabolism for biosynthesis of a variety of sulfur-containing biomolecules. Component of the suf operon, which is activated and required under specific conditions such as oxidative stress and iron limitation. Acts as a potent selenocysteine lyase in vitro, that mobilizes selenium from L-selenocysteine. Selenocysteine lyase activity is however unsure in vivo.</text>
</comment>
<comment type="catalytic activity">
    <reaction evidence="1">
        <text>(sulfur carrier)-H + L-cysteine = (sulfur carrier)-SH + L-alanine</text>
        <dbReference type="Rhea" id="RHEA:43892"/>
        <dbReference type="Rhea" id="RHEA-COMP:14737"/>
        <dbReference type="Rhea" id="RHEA-COMP:14739"/>
        <dbReference type="ChEBI" id="CHEBI:29917"/>
        <dbReference type="ChEBI" id="CHEBI:35235"/>
        <dbReference type="ChEBI" id="CHEBI:57972"/>
        <dbReference type="ChEBI" id="CHEBI:64428"/>
        <dbReference type="EC" id="2.8.1.7"/>
    </reaction>
</comment>
<comment type="catalytic activity">
    <reaction evidence="1">
        <text>L-selenocysteine + AH2 = hydrogenselenide + L-alanine + A + H(+)</text>
        <dbReference type="Rhea" id="RHEA:11632"/>
        <dbReference type="ChEBI" id="CHEBI:13193"/>
        <dbReference type="ChEBI" id="CHEBI:15378"/>
        <dbReference type="ChEBI" id="CHEBI:17499"/>
        <dbReference type="ChEBI" id="CHEBI:29317"/>
        <dbReference type="ChEBI" id="CHEBI:57843"/>
        <dbReference type="ChEBI" id="CHEBI:57972"/>
        <dbReference type="EC" id="4.4.1.16"/>
    </reaction>
</comment>
<comment type="cofactor">
    <cofactor evidence="1">
        <name>pyridoxal 5'-phosphate</name>
        <dbReference type="ChEBI" id="CHEBI:597326"/>
    </cofactor>
</comment>
<comment type="pathway">
    <text evidence="1">Cofactor biosynthesis; iron-sulfur cluster biosynthesis.</text>
</comment>
<comment type="subunit">
    <text evidence="1">Homodimer. Interacts with SufE and the SufBCD complex composed of SufB, SufC and SufD. The interaction with SufE is required to mediate the direct transfer of the sulfur atom from the S-sulfanylcysteine.</text>
</comment>
<comment type="subcellular location">
    <subcellularLocation>
        <location evidence="1">Cytoplasm</location>
    </subcellularLocation>
</comment>
<comment type="similarity">
    <text evidence="1">Belongs to the class-V pyridoxal-phosphate-dependent aminotransferase family. Csd subfamily.</text>
</comment>
<comment type="sequence caution" evidence="2">
    <conflict type="erroneous initiation">
        <sequence resource="EMBL-CDS" id="AAM85504"/>
    </conflict>
</comment>
<comment type="sequence caution" evidence="2">
    <conflict type="erroneous initiation">
        <sequence resource="EMBL-CDS" id="AAS62394"/>
    </conflict>
</comment>
<sequence>MNFPIERVRADFPLLSRQVNGQPLVYLDSAASAQKPQAVIDKELHFYRDGYAAVHRGIHSLSAEATQQMEAVRTQVADFIHAASAEEIIFVRGTTEAINLVANSYGRHFLAAGDSIIITEMEHHANIVPWQMLAQDLGVEIRVWPLTATGELEITALAALIDDTTRLLAVTQVSNVLGTVNPIKDIVAQAKAAGLVVLVDGAQAVMHQPVDVQALGCDFYVFSGHKLYGPSGIGILYGKSALLQQMPPWEGGGAMIKTVSLTQGTTFADAPWRFEAGSPNTAGIMGLGAAIDYVTELGLLPIQQYEQSLMHYALAQLSQIKSLTLYGPTERAGVIAFNLGQHHAYDVGSFLDQYGIAIRTGHHCAMPLMAFYQVPSMCRASLALYNTREDVDRLVAGLQRIEKLLG</sequence>
<proteinExistence type="inferred from homology"/>